<reference key="1">
    <citation type="journal article" date="2007" name="DNA Res.">
        <title>Complete genomic structure of the bloom-forming toxic cyanobacterium Microcystis aeruginosa NIES-843.</title>
        <authorList>
            <person name="Kaneko T."/>
            <person name="Nakajima N."/>
            <person name="Okamoto S."/>
            <person name="Suzuki I."/>
            <person name="Tanabe Y."/>
            <person name="Tamaoki M."/>
            <person name="Nakamura Y."/>
            <person name="Kasai F."/>
            <person name="Watanabe A."/>
            <person name="Kawashima K."/>
            <person name="Kishida Y."/>
            <person name="Ono A."/>
            <person name="Shimizu Y."/>
            <person name="Takahashi C."/>
            <person name="Minami C."/>
            <person name="Fujishiro T."/>
            <person name="Kohara M."/>
            <person name="Katoh M."/>
            <person name="Nakazaki N."/>
            <person name="Nakayama S."/>
            <person name="Yamada M."/>
            <person name="Tabata S."/>
            <person name="Watanabe M.M."/>
        </authorList>
    </citation>
    <scope>NUCLEOTIDE SEQUENCE [LARGE SCALE GENOMIC DNA]</scope>
    <source>
        <strain>NIES-843 / IAM M-247</strain>
    </source>
</reference>
<organism>
    <name type="scientific">Microcystis aeruginosa (strain NIES-843 / IAM M-2473)</name>
    <dbReference type="NCBI Taxonomy" id="449447"/>
    <lineage>
        <taxon>Bacteria</taxon>
        <taxon>Bacillati</taxon>
        <taxon>Cyanobacteriota</taxon>
        <taxon>Cyanophyceae</taxon>
        <taxon>Oscillatoriophycideae</taxon>
        <taxon>Chroococcales</taxon>
        <taxon>Microcystaceae</taxon>
        <taxon>Microcystis</taxon>
    </lineage>
</organism>
<keyword id="KW-0378">Hydrolase</keyword>
<dbReference type="EC" id="3.5.1.2" evidence="1"/>
<dbReference type="EMBL" id="AP009552">
    <property type="protein sequence ID" value="BAG03598.1"/>
    <property type="molecule type" value="Genomic_DNA"/>
</dbReference>
<dbReference type="RefSeq" id="WP_002796994.1">
    <property type="nucleotide sequence ID" value="NC_010296.1"/>
</dbReference>
<dbReference type="SMR" id="B0JPM4"/>
<dbReference type="STRING" id="449447.MAE_37760"/>
<dbReference type="PaxDb" id="449447-MAE_37760"/>
<dbReference type="EnsemblBacteria" id="BAG03598">
    <property type="protein sequence ID" value="BAG03598"/>
    <property type="gene ID" value="MAE_37760"/>
</dbReference>
<dbReference type="KEGG" id="mar:MAE_37760"/>
<dbReference type="eggNOG" id="COG2066">
    <property type="taxonomic scope" value="Bacteria"/>
</dbReference>
<dbReference type="HOGENOM" id="CLU_027932_1_0_3"/>
<dbReference type="BioCyc" id="MAER449447:MAE_RS16320-MONOMER"/>
<dbReference type="Proteomes" id="UP000001510">
    <property type="component" value="Chromosome"/>
</dbReference>
<dbReference type="GO" id="GO:0004359">
    <property type="term" value="F:glutaminase activity"/>
    <property type="evidence" value="ECO:0007669"/>
    <property type="project" value="UniProtKB-UniRule"/>
</dbReference>
<dbReference type="GO" id="GO:0006537">
    <property type="term" value="P:glutamate biosynthetic process"/>
    <property type="evidence" value="ECO:0007669"/>
    <property type="project" value="TreeGrafter"/>
</dbReference>
<dbReference type="GO" id="GO:0006543">
    <property type="term" value="P:glutamine catabolic process"/>
    <property type="evidence" value="ECO:0007669"/>
    <property type="project" value="TreeGrafter"/>
</dbReference>
<dbReference type="FunFam" id="3.40.710.10:FF:000005">
    <property type="entry name" value="Glutaminase"/>
    <property type="match status" value="1"/>
</dbReference>
<dbReference type="Gene3D" id="3.40.710.10">
    <property type="entry name" value="DD-peptidase/beta-lactamase superfamily"/>
    <property type="match status" value="1"/>
</dbReference>
<dbReference type="HAMAP" id="MF_00313">
    <property type="entry name" value="Glutaminase"/>
    <property type="match status" value="1"/>
</dbReference>
<dbReference type="InterPro" id="IPR012338">
    <property type="entry name" value="Beta-lactam/transpept-like"/>
</dbReference>
<dbReference type="InterPro" id="IPR015868">
    <property type="entry name" value="Glutaminase"/>
</dbReference>
<dbReference type="NCBIfam" id="TIGR03814">
    <property type="entry name" value="Gln_ase"/>
    <property type="match status" value="1"/>
</dbReference>
<dbReference type="PANTHER" id="PTHR12544">
    <property type="entry name" value="GLUTAMINASE"/>
    <property type="match status" value="1"/>
</dbReference>
<dbReference type="PANTHER" id="PTHR12544:SF29">
    <property type="entry name" value="GLUTAMINASE"/>
    <property type="match status" value="1"/>
</dbReference>
<dbReference type="Pfam" id="PF04960">
    <property type="entry name" value="Glutaminase"/>
    <property type="match status" value="1"/>
</dbReference>
<dbReference type="SUPFAM" id="SSF56601">
    <property type="entry name" value="beta-lactamase/transpeptidase-like"/>
    <property type="match status" value="1"/>
</dbReference>
<feature type="chain" id="PRO_0000336031" description="Glutaminase">
    <location>
        <begin position="1"/>
        <end position="338"/>
    </location>
</feature>
<feature type="binding site" evidence="1">
    <location>
        <position position="80"/>
    </location>
    <ligand>
        <name>substrate</name>
    </ligand>
</feature>
<feature type="binding site" evidence="1">
    <location>
        <position position="130"/>
    </location>
    <ligand>
        <name>substrate</name>
    </ligand>
</feature>
<feature type="binding site" evidence="1">
    <location>
        <position position="174"/>
    </location>
    <ligand>
        <name>substrate</name>
    </ligand>
</feature>
<feature type="binding site" evidence="1">
    <location>
        <position position="181"/>
    </location>
    <ligand>
        <name>substrate</name>
    </ligand>
</feature>
<feature type="binding site" evidence="1">
    <location>
        <position position="205"/>
    </location>
    <ligand>
        <name>substrate</name>
    </ligand>
</feature>
<feature type="binding site" evidence="1">
    <location>
        <position position="257"/>
    </location>
    <ligand>
        <name>substrate</name>
    </ligand>
</feature>
<feature type="binding site" evidence="1">
    <location>
        <position position="275"/>
    </location>
    <ligand>
        <name>substrate</name>
    </ligand>
</feature>
<proteinExistence type="inferred from homology"/>
<name>GLSA_MICAN</name>
<sequence>MASPKDFISPVNSGQKLVYPFRNYLNYLHDKYSDLQTGKIADYIPELALAAPQWFGISVITTDGQIFEVGDCQQTFTVQSISKAFVFGLALEDHGREYVNSKVGVEPTGEAFNSIILDEKTNRPYNPMVNAGAIATTDLITGQNATERLKRILEMFKRYTGRDHEINVPVFLSEKSTGNRNRAMAYLMLNFGMVSDKIEETLDLYCQQCAILVHAHDLALMAATLANGGVNPITGIRAIDEHYVQDVISVMLTCGMYDASGEWAYRVGLPAKSGVGGGITAVVPHQLGIGTFSPLLDEKGNSIRGVKICQNISEDFGLHLFNVAKPERDLKTWLEGNS</sequence>
<comment type="catalytic activity">
    <reaction evidence="1">
        <text>L-glutamine + H2O = L-glutamate + NH4(+)</text>
        <dbReference type="Rhea" id="RHEA:15889"/>
        <dbReference type="ChEBI" id="CHEBI:15377"/>
        <dbReference type="ChEBI" id="CHEBI:28938"/>
        <dbReference type="ChEBI" id="CHEBI:29985"/>
        <dbReference type="ChEBI" id="CHEBI:58359"/>
        <dbReference type="EC" id="3.5.1.2"/>
    </reaction>
</comment>
<comment type="subunit">
    <text evidence="1">Homotetramer.</text>
</comment>
<comment type="similarity">
    <text evidence="1">Belongs to the glutaminase family.</text>
</comment>
<evidence type="ECO:0000255" key="1">
    <source>
        <dbReference type="HAMAP-Rule" id="MF_00313"/>
    </source>
</evidence>
<protein>
    <recommendedName>
        <fullName evidence="1">Glutaminase</fullName>
        <ecNumber evidence="1">3.5.1.2</ecNumber>
    </recommendedName>
</protein>
<gene>
    <name evidence="1" type="primary">glsA</name>
    <name type="ordered locus">MAE_37760</name>
</gene>
<accession>B0JPM4</accession>